<name>IBPB_SALPB</name>
<organism>
    <name type="scientific">Salmonella paratyphi B (strain ATCC BAA-1250 / SPB7)</name>
    <dbReference type="NCBI Taxonomy" id="1016998"/>
    <lineage>
        <taxon>Bacteria</taxon>
        <taxon>Pseudomonadati</taxon>
        <taxon>Pseudomonadota</taxon>
        <taxon>Gammaproteobacteria</taxon>
        <taxon>Enterobacterales</taxon>
        <taxon>Enterobacteriaceae</taxon>
        <taxon>Salmonella</taxon>
    </lineage>
</organism>
<keyword id="KW-0143">Chaperone</keyword>
<keyword id="KW-0963">Cytoplasm</keyword>
<keyword id="KW-0346">Stress response</keyword>
<comment type="function">
    <text evidence="1">Associates with aggregated proteins, together with IbpA, to stabilize and protect them from irreversible denaturation and extensive proteolysis during heat shock and oxidative stress. Aggregated proteins bound to the IbpAB complex are more efficiently refolded and reactivated by the ATP-dependent chaperone systems ClpB and DnaK/DnaJ/GrpE. Its activity is ATP-independent.</text>
</comment>
<comment type="subunit">
    <text evidence="1">Homodimer. Forms homomultimers of about 100-150 subunits at optimal growth temperatures. Conformation changes to oligomers at high temperatures or high ionic concentrations. The decrease in size of the multimers is accompanied by an increase in chaperone activity.</text>
</comment>
<comment type="subcellular location">
    <subcellularLocation>
        <location evidence="1">Cytoplasm</location>
    </subcellularLocation>
</comment>
<comment type="domain">
    <text evidence="1">The N- and C-terminal flexible termini are involved in oligomerization and in the binding of non-native substrate proteins, and are essential for chaperone activity.</text>
</comment>
<comment type="similarity">
    <text evidence="1 2">Belongs to the small heat shock protein (HSP20) family.</text>
</comment>
<protein>
    <recommendedName>
        <fullName evidence="1">Small heat shock protein IbpB</fullName>
    </recommendedName>
    <alternativeName>
        <fullName evidence="1">16 kDa heat shock protein B</fullName>
    </alternativeName>
</protein>
<accession>A9MWJ6</accession>
<reference key="1">
    <citation type="submission" date="2007-11" db="EMBL/GenBank/DDBJ databases">
        <authorList>
            <consortium name="The Salmonella enterica serovar Paratyphi B Genome Sequencing Project"/>
            <person name="McClelland M."/>
            <person name="Sanderson E.K."/>
            <person name="Porwollik S."/>
            <person name="Spieth J."/>
            <person name="Clifton W.S."/>
            <person name="Fulton R."/>
            <person name="Cordes M."/>
            <person name="Wollam A."/>
            <person name="Shah N."/>
            <person name="Pepin K."/>
            <person name="Bhonagiri V."/>
            <person name="Nash W."/>
            <person name="Johnson M."/>
            <person name="Thiruvilangam P."/>
            <person name="Wilson R."/>
        </authorList>
    </citation>
    <scope>NUCLEOTIDE SEQUENCE [LARGE SCALE GENOMIC DNA]</scope>
    <source>
        <strain>ATCC BAA-1250 / SPB7</strain>
    </source>
</reference>
<proteinExistence type="inferred from homology"/>
<gene>
    <name evidence="1" type="primary">ibpB</name>
    <name type="ordered locus">SPAB_04742</name>
</gene>
<evidence type="ECO:0000255" key="1">
    <source>
        <dbReference type="HAMAP-Rule" id="MF_02001"/>
    </source>
</evidence>
<evidence type="ECO:0000255" key="2">
    <source>
        <dbReference type="PROSITE-ProRule" id="PRU00285"/>
    </source>
</evidence>
<sequence>MRNYDLSPLLRQWIGFDKLANALQNSGESQSFPPYNIEKSDDNHYRITLALAGFRQEDLDIQLEGTRLTVKGTPEQPENEPKWLHQGLVMQPFSLSFTLAENMEVSGATFTNGLLHIDLTRNEPETIAPQRIAINERSALNS</sequence>
<dbReference type="EMBL" id="CP000886">
    <property type="protein sequence ID" value="ABX70053.1"/>
    <property type="molecule type" value="Genomic_DNA"/>
</dbReference>
<dbReference type="RefSeq" id="WP_001246919.1">
    <property type="nucleotide sequence ID" value="NC_010102.1"/>
</dbReference>
<dbReference type="SMR" id="A9MWJ6"/>
<dbReference type="KEGG" id="spq:SPAB_04742"/>
<dbReference type="PATRIC" id="fig|1016998.12.peg.4460"/>
<dbReference type="HOGENOM" id="CLU_046737_4_2_6"/>
<dbReference type="BioCyc" id="SENT1016998:SPAB_RS19240-MONOMER"/>
<dbReference type="Proteomes" id="UP000008556">
    <property type="component" value="Chromosome"/>
</dbReference>
<dbReference type="GO" id="GO:0005737">
    <property type="term" value="C:cytoplasm"/>
    <property type="evidence" value="ECO:0007669"/>
    <property type="project" value="UniProtKB-SubCell"/>
</dbReference>
<dbReference type="GO" id="GO:0050821">
    <property type="term" value="P:protein stabilization"/>
    <property type="evidence" value="ECO:0007669"/>
    <property type="project" value="UniProtKB-UniRule"/>
</dbReference>
<dbReference type="CDD" id="cd06470">
    <property type="entry name" value="ACD_IbpA-B_like"/>
    <property type="match status" value="1"/>
</dbReference>
<dbReference type="Gene3D" id="2.60.40.790">
    <property type="match status" value="1"/>
</dbReference>
<dbReference type="HAMAP" id="MF_02001">
    <property type="entry name" value="HSP20_IbpB"/>
    <property type="match status" value="1"/>
</dbReference>
<dbReference type="InterPro" id="IPR002068">
    <property type="entry name" value="A-crystallin/Hsp20_dom"/>
</dbReference>
<dbReference type="InterPro" id="IPR037913">
    <property type="entry name" value="ACD_IbpA/B"/>
</dbReference>
<dbReference type="InterPro" id="IPR008978">
    <property type="entry name" value="HSP20-like_chaperone"/>
</dbReference>
<dbReference type="InterPro" id="IPR022848">
    <property type="entry name" value="HSP20_IbpB"/>
</dbReference>
<dbReference type="NCBIfam" id="NF008618">
    <property type="entry name" value="PRK11597.1"/>
    <property type="match status" value="1"/>
</dbReference>
<dbReference type="PANTHER" id="PTHR47062">
    <property type="match status" value="1"/>
</dbReference>
<dbReference type="PANTHER" id="PTHR47062:SF2">
    <property type="entry name" value="SMALL HEAT SHOCK PROTEIN IBPB"/>
    <property type="match status" value="1"/>
</dbReference>
<dbReference type="Pfam" id="PF00011">
    <property type="entry name" value="HSP20"/>
    <property type="match status" value="1"/>
</dbReference>
<dbReference type="SUPFAM" id="SSF49764">
    <property type="entry name" value="HSP20-like chaperones"/>
    <property type="match status" value="1"/>
</dbReference>
<dbReference type="PROSITE" id="PS01031">
    <property type="entry name" value="SHSP"/>
    <property type="match status" value="1"/>
</dbReference>
<feature type="chain" id="PRO_1000088540" description="Small heat shock protein IbpB">
    <location>
        <begin position="1"/>
        <end position="142"/>
    </location>
</feature>
<feature type="domain" description="sHSP" evidence="2">
    <location>
        <begin position="26"/>
        <end position="137"/>
    </location>
</feature>